<accession>Q66WV0</accession>
<gene>
    <name type="primary">RBR1</name>
</gene>
<name>RBR1_NICBE</name>
<proteinExistence type="evidence at transcript level"/>
<comment type="function">
    <text evidence="1 3">Regulator of biological processes that recruits a histone deacetylase to control gene transcription. Formation of stable complexes with geminiviridae replication-associated proteins may create a cellular environment which favors viral DNA replication (By similarity). May play a role in the entry into mitosis, negatively regulating the cell proliferation during leaf, stem, and flower development. Critical regulator of the endocycle.</text>
</comment>
<comment type="subcellular location">
    <subcellularLocation>
        <location evidence="1">Nucleus</location>
    </subcellularLocation>
</comment>
<comment type="tissue specificity">
    <text evidence="3">Expressed in roots, stems, leaves and flowers.</text>
</comment>
<comment type="miscellaneous">
    <text>Plants undergoing virus-induced gene silencing (VIGS) exhibit clusters of undifferentiated cells around mature stomata, indicating uncontrolled cell division from meristemoids, as well as increased ploidy level in some cells.</text>
</comment>
<comment type="similarity">
    <text evidence="4">Belongs to the retinoblastoma protein (RB) family.</text>
</comment>
<feature type="chain" id="PRO_0000380236" description="Retinoblastoma-related protein 1">
    <location>
        <begin position="1"/>
        <end position="1003"/>
    </location>
</feature>
<feature type="region of interest" description="Pocket" evidence="1">
    <location>
        <begin position="405"/>
        <end position="860"/>
    </location>
</feature>
<feature type="region of interest" description="Domain A" evidence="1">
    <location>
        <begin position="405"/>
        <end position="607"/>
    </location>
</feature>
<feature type="region of interest" description="Spacer" evidence="1">
    <location>
        <begin position="608"/>
        <end position="729"/>
    </location>
</feature>
<feature type="region of interest" description="Domain B" evidence="1">
    <location>
        <begin position="730"/>
        <end position="860"/>
    </location>
</feature>
<feature type="region of interest" description="Disordered" evidence="2">
    <location>
        <begin position="868"/>
        <end position="899"/>
    </location>
</feature>
<dbReference type="EMBL" id="AY699399">
    <property type="protein sequence ID" value="AAU05979.1"/>
    <property type="molecule type" value="mRNA"/>
</dbReference>
<dbReference type="SMR" id="Q66WV0"/>
<dbReference type="GO" id="GO:0000785">
    <property type="term" value="C:chromatin"/>
    <property type="evidence" value="ECO:0007669"/>
    <property type="project" value="TreeGrafter"/>
</dbReference>
<dbReference type="GO" id="GO:0005634">
    <property type="term" value="C:nucleus"/>
    <property type="evidence" value="ECO:0007669"/>
    <property type="project" value="UniProtKB-SubCell"/>
</dbReference>
<dbReference type="GO" id="GO:0005667">
    <property type="term" value="C:transcription regulator complex"/>
    <property type="evidence" value="ECO:0007669"/>
    <property type="project" value="TreeGrafter"/>
</dbReference>
<dbReference type="GO" id="GO:0000977">
    <property type="term" value="F:RNA polymerase II transcription regulatory region sequence-specific DNA binding"/>
    <property type="evidence" value="ECO:0007669"/>
    <property type="project" value="TreeGrafter"/>
</dbReference>
<dbReference type="GO" id="GO:0030154">
    <property type="term" value="P:cell differentiation"/>
    <property type="evidence" value="ECO:0007669"/>
    <property type="project" value="TreeGrafter"/>
</dbReference>
<dbReference type="GO" id="GO:0051782">
    <property type="term" value="P:negative regulation of cell division"/>
    <property type="evidence" value="ECO:0000315"/>
    <property type="project" value="UniProtKB"/>
</dbReference>
<dbReference type="GO" id="GO:2000134">
    <property type="term" value="P:negative regulation of G1/S transition of mitotic cell cycle"/>
    <property type="evidence" value="ECO:0007669"/>
    <property type="project" value="TreeGrafter"/>
</dbReference>
<dbReference type="GO" id="GO:0032875">
    <property type="term" value="P:regulation of DNA endoreduplication"/>
    <property type="evidence" value="ECO:0000315"/>
    <property type="project" value="UniProtKB"/>
</dbReference>
<dbReference type="GO" id="GO:0006357">
    <property type="term" value="P:regulation of transcription by RNA polymerase II"/>
    <property type="evidence" value="ECO:0007669"/>
    <property type="project" value="InterPro"/>
</dbReference>
<dbReference type="FunFam" id="1.10.472.10:FF:000030">
    <property type="entry name" value="Retinoblastoma-related protein 1"/>
    <property type="match status" value="1"/>
</dbReference>
<dbReference type="FunFam" id="1.10.472.10:FF:000067">
    <property type="entry name" value="Retinoblastoma-related protein 1"/>
    <property type="match status" value="1"/>
</dbReference>
<dbReference type="FunFam" id="1.10.472.140:FF:000003">
    <property type="entry name" value="Retinoblastoma-related protein 1"/>
    <property type="match status" value="1"/>
</dbReference>
<dbReference type="Gene3D" id="1.10.472.140">
    <property type="match status" value="1"/>
</dbReference>
<dbReference type="Gene3D" id="1.10.472.10">
    <property type="entry name" value="Cyclin-like"/>
    <property type="match status" value="2"/>
</dbReference>
<dbReference type="InterPro" id="IPR013763">
    <property type="entry name" value="Cyclin-like_dom"/>
</dbReference>
<dbReference type="InterPro" id="IPR036915">
    <property type="entry name" value="Cyclin-like_sf"/>
</dbReference>
<dbReference type="InterPro" id="IPR002720">
    <property type="entry name" value="RB_A"/>
</dbReference>
<dbReference type="InterPro" id="IPR002719">
    <property type="entry name" value="RB_B"/>
</dbReference>
<dbReference type="InterPro" id="IPR028309">
    <property type="entry name" value="RB_fam"/>
</dbReference>
<dbReference type="InterPro" id="IPR024599">
    <property type="entry name" value="RB_N"/>
</dbReference>
<dbReference type="PANTHER" id="PTHR13742:SF17">
    <property type="entry name" value="RE32990P-RELATED"/>
    <property type="match status" value="1"/>
</dbReference>
<dbReference type="PANTHER" id="PTHR13742">
    <property type="entry name" value="RETINOBLASTOMA-ASSOCIATED PROTEIN RB -RELATED"/>
    <property type="match status" value="1"/>
</dbReference>
<dbReference type="Pfam" id="PF11934">
    <property type="entry name" value="DUF3452"/>
    <property type="match status" value="1"/>
</dbReference>
<dbReference type="Pfam" id="PF01858">
    <property type="entry name" value="RB_A"/>
    <property type="match status" value="1"/>
</dbReference>
<dbReference type="Pfam" id="PF01857">
    <property type="entry name" value="RB_B"/>
    <property type="match status" value="1"/>
</dbReference>
<dbReference type="SMART" id="SM00385">
    <property type="entry name" value="CYCLIN"/>
    <property type="match status" value="1"/>
</dbReference>
<dbReference type="SMART" id="SM01367">
    <property type="entry name" value="DUF3452"/>
    <property type="match status" value="1"/>
</dbReference>
<dbReference type="SMART" id="SM01368">
    <property type="entry name" value="RB_A"/>
    <property type="match status" value="1"/>
</dbReference>
<dbReference type="SUPFAM" id="SSF47954">
    <property type="entry name" value="Cyclin-like"/>
    <property type="match status" value="2"/>
</dbReference>
<organism>
    <name type="scientific">Nicotiana benthamiana</name>
    <dbReference type="NCBI Taxonomy" id="4100"/>
    <lineage>
        <taxon>Eukaryota</taxon>
        <taxon>Viridiplantae</taxon>
        <taxon>Streptophyta</taxon>
        <taxon>Embryophyta</taxon>
        <taxon>Tracheophyta</taxon>
        <taxon>Spermatophyta</taxon>
        <taxon>Magnoliopsida</taxon>
        <taxon>eudicotyledons</taxon>
        <taxon>Gunneridae</taxon>
        <taxon>Pentapetalae</taxon>
        <taxon>asterids</taxon>
        <taxon>lamiids</taxon>
        <taxon>Solanales</taxon>
        <taxon>Solanaceae</taxon>
        <taxon>Nicotianoideae</taxon>
        <taxon>Nicotianeae</taxon>
        <taxon>Nicotiana</taxon>
    </lineage>
</organism>
<sequence>MVELNNCSNSEETGGVDSLEVRFTDFCKNGLSMGESFVTEATKLFNDSKHLLLSNNSTIGVITQEGVERYWFVFVLYSVKRLSEKEAGNSNNGDKGNAFSLCQILRGAKLNVVDFFKELPQFILKVGPTLSNLYGSDWEKRLEVKELQTNFVHLSLLSKYYKRAYQELFLASGNNEDKPSATSNSAIHLPQYYRFGWLLFLSLRIHVFSRFKDLVTCTNGLVSVLAILMIHVPVRFRNFNIDDSSRFVKKGDKVDLLASLSKIYQTSIDDLRETMDKVNNLITEKLKKKPCLASEFRTENLDNLDTDGLTYFEDLMEESCLSSSVSTLEKDYSDAIQNKGELDERIFVNEEDSLLGSGSLSGGAVNMNGTKRKFDAMASPAKTVTSTLSPYRSPNCANSKMTAATPVSTAMTTARWLRTVIAPLQPKPSAELERFLSSCDRDVTADVIRRAQIILEAIFPSSGPAEHCAAGGSLQSTSLMDNIWAEQRRSEALKLYYRVLQTMCTAESQILNGNNLTSLLTNERFHRCMLACSAELVLATHKTVTMLFPAVLERTGITAFDLSKVIESFIRHEESLPRELRRHLNSLEERLLESMVWEKGSSMYNSLAVAKPSLAAEINRMGLLAEPMPSLDAIAMHINLSSGSLPPLPSLHKNNLAPNGQIGDIRSPKKVCSEYRSVLVERNSFTSPVKDRFLALNNIKSKFPPPALHSAFASPTRPNPGGGGETCAETAINVFFGKIVKLAAVRINGMIERLQLSQQIRETVYCLFQKILSQRTSLFFNRHIDQIILCSFYGVAKISQLNLTFKEIICNYRKQPQCKPQVFRSVFVDWTLARHNVRTGADHVDIITFYNEMFIPSVKPLLVELAPAGNNSEKNDHNDGQGPASPKPSPFPKLPDMSPKKVSAVHNVYVSPLRASKMDALISHSSKSYYACVGESTHAYQSPSKDLDVINNRLNGNRKLRGALNFDVDAGLVSDSIVANSLYLQNGNCRSPVAHVKTEQPES</sequence>
<protein>
    <recommendedName>
        <fullName>Retinoblastoma-related protein 1</fullName>
        <shortName>NbRBR1</shortName>
    </recommendedName>
</protein>
<reference key="1">
    <citation type="journal article" date="2005" name="Plant J.">
        <title>Retinoblastoma protein regulates cell proliferation, differentiation, and endoreduplication in plants.</title>
        <authorList>
            <person name="Park J.-A."/>
            <person name="Ahn J.-W."/>
            <person name="Kim Y.-K."/>
            <person name="Kim S.J."/>
            <person name="Kim J.-K."/>
            <person name="Kim W.T."/>
            <person name="Pai H.-S."/>
        </authorList>
    </citation>
    <scope>NUCLEOTIDE SEQUENCE [MRNA]</scope>
    <scope>FUNCTION</scope>
    <scope>TISSUE SPECIFICITY</scope>
</reference>
<keyword id="KW-0131">Cell cycle</keyword>
<keyword id="KW-0539">Nucleus</keyword>
<keyword id="KW-0678">Repressor</keyword>
<keyword id="KW-0804">Transcription</keyword>
<keyword id="KW-0805">Transcription regulation</keyword>
<evidence type="ECO:0000250" key="1"/>
<evidence type="ECO:0000256" key="2">
    <source>
        <dbReference type="SAM" id="MobiDB-lite"/>
    </source>
</evidence>
<evidence type="ECO:0000269" key="3">
    <source>
    </source>
</evidence>
<evidence type="ECO:0000305" key="4"/>